<proteinExistence type="inferred from homology"/>
<accession>Q7VJD2</accession>
<name>RL9_HELHP</name>
<organism>
    <name type="scientific">Helicobacter hepaticus (strain ATCC 51449 / 3B1)</name>
    <dbReference type="NCBI Taxonomy" id="235279"/>
    <lineage>
        <taxon>Bacteria</taxon>
        <taxon>Pseudomonadati</taxon>
        <taxon>Campylobacterota</taxon>
        <taxon>Epsilonproteobacteria</taxon>
        <taxon>Campylobacterales</taxon>
        <taxon>Helicobacteraceae</taxon>
        <taxon>Helicobacter</taxon>
    </lineage>
</organism>
<reference key="1">
    <citation type="journal article" date="2003" name="Proc. Natl. Acad. Sci. U.S.A.">
        <title>The complete genome sequence of the carcinogenic bacterium Helicobacter hepaticus.</title>
        <authorList>
            <person name="Suerbaum S."/>
            <person name="Josenhans C."/>
            <person name="Sterzenbach T."/>
            <person name="Drescher B."/>
            <person name="Brandt P."/>
            <person name="Bell M."/>
            <person name="Droege M."/>
            <person name="Fartmann B."/>
            <person name="Fischer H.-P."/>
            <person name="Ge Z."/>
            <person name="Hoerster A."/>
            <person name="Holland R."/>
            <person name="Klein K."/>
            <person name="Koenig J."/>
            <person name="Macko L."/>
            <person name="Mendz G.L."/>
            <person name="Nyakatura G."/>
            <person name="Schauer D.B."/>
            <person name="Shen Z."/>
            <person name="Weber J."/>
            <person name="Frosch M."/>
            <person name="Fox J.G."/>
        </authorList>
    </citation>
    <scope>NUCLEOTIDE SEQUENCE [LARGE SCALE GENOMIC DNA]</scope>
    <source>
        <strain>ATCC 51449 / 3B1</strain>
    </source>
</reference>
<evidence type="ECO:0000255" key="1">
    <source>
        <dbReference type="HAMAP-Rule" id="MF_00503"/>
    </source>
</evidence>
<evidence type="ECO:0000305" key="2"/>
<comment type="function">
    <text evidence="1">Binds to the 23S rRNA.</text>
</comment>
<comment type="similarity">
    <text evidence="1">Belongs to the bacterial ribosomal protein bL9 family.</text>
</comment>
<gene>
    <name evidence="1" type="primary">rplI</name>
    <name type="ordered locus">HH_0311</name>
</gene>
<sequence length="147" mass="16304">MKVLLLENVQGLGKKGEIVEVKDGYGQNFLIAKGKAQRATNEVINKYKAQQRKAEELAALEKAEMQQMKKTIESLTLTLHKKVGANDTLFGSITKEEIALALEEHKVSLDKKHIEIAQAIKHTGNFEVQVKLGQGINATLKLEIKAQ</sequence>
<dbReference type="EMBL" id="AE017125">
    <property type="protein sequence ID" value="AAP76908.1"/>
    <property type="molecule type" value="Genomic_DNA"/>
</dbReference>
<dbReference type="RefSeq" id="WP_011115154.1">
    <property type="nucleotide sequence ID" value="NC_004917.1"/>
</dbReference>
<dbReference type="SMR" id="Q7VJD2"/>
<dbReference type="STRING" id="235279.HH_0311"/>
<dbReference type="KEGG" id="hhe:HH_0311"/>
<dbReference type="eggNOG" id="COG0359">
    <property type="taxonomic scope" value="Bacteria"/>
</dbReference>
<dbReference type="HOGENOM" id="CLU_078938_3_0_7"/>
<dbReference type="OrthoDB" id="9788336at2"/>
<dbReference type="Proteomes" id="UP000002495">
    <property type="component" value="Chromosome"/>
</dbReference>
<dbReference type="GO" id="GO:1990904">
    <property type="term" value="C:ribonucleoprotein complex"/>
    <property type="evidence" value="ECO:0007669"/>
    <property type="project" value="UniProtKB-KW"/>
</dbReference>
<dbReference type="GO" id="GO:0005840">
    <property type="term" value="C:ribosome"/>
    <property type="evidence" value="ECO:0007669"/>
    <property type="project" value="UniProtKB-KW"/>
</dbReference>
<dbReference type="GO" id="GO:0019843">
    <property type="term" value="F:rRNA binding"/>
    <property type="evidence" value="ECO:0007669"/>
    <property type="project" value="UniProtKB-UniRule"/>
</dbReference>
<dbReference type="GO" id="GO:0003735">
    <property type="term" value="F:structural constituent of ribosome"/>
    <property type="evidence" value="ECO:0007669"/>
    <property type="project" value="InterPro"/>
</dbReference>
<dbReference type="GO" id="GO:0006412">
    <property type="term" value="P:translation"/>
    <property type="evidence" value="ECO:0007669"/>
    <property type="project" value="UniProtKB-UniRule"/>
</dbReference>
<dbReference type="FunFam" id="3.40.5.10:FF:000002">
    <property type="entry name" value="50S ribosomal protein L9"/>
    <property type="match status" value="1"/>
</dbReference>
<dbReference type="Gene3D" id="3.10.430.100">
    <property type="entry name" value="Ribosomal protein L9, C-terminal domain"/>
    <property type="match status" value="1"/>
</dbReference>
<dbReference type="Gene3D" id="3.40.5.10">
    <property type="entry name" value="Ribosomal protein L9, N-terminal domain"/>
    <property type="match status" value="1"/>
</dbReference>
<dbReference type="HAMAP" id="MF_00503">
    <property type="entry name" value="Ribosomal_bL9"/>
    <property type="match status" value="1"/>
</dbReference>
<dbReference type="InterPro" id="IPR000244">
    <property type="entry name" value="Ribosomal_bL9"/>
</dbReference>
<dbReference type="InterPro" id="IPR009027">
    <property type="entry name" value="Ribosomal_bL9/RNase_H1_N"/>
</dbReference>
<dbReference type="InterPro" id="IPR020594">
    <property type="entry name" value="Ribosomal_bL9_bac/chp"/>
</dbReference>
<dbReference type="InterPro" id="IPR020069">
    <property type="entry name" value="Ribosomal_bL9_C"/>
</dbReference>
<dbReference type="InterPro" id="IPR036791">
    <property type="entry name" value="Ribosomal_bL9_C_sf"/>
</dbReference>
<dbReference type="InterPro" id="IPR020070">
    <property type="entry name" value="Ribosomal_bL9_N"/>
</dbReference>
<dbReference type="InterPro" id="IPR036935">
    <property type="entry name" value="Ribosomal_bL9_N_sf"/>
</dbReference>
<dbReference type="NCBIfam" id="TIGR00158">
    <property type="entry name" value="L9"/>
    <property type="match status" value="1"/>
</dbReference>
<dbReference type="PANTHER" id="PTHR21368">
    <property type="entry name" value="50S RIBOSOMAL PROTEIN L9"/>
    <property type="match status" value="1"/>
</dbReference>
<dbReference type="Pfam" id="PF03948">
    <property type="entry name" value="Ribosomal_L9_C"/>
    <property type="match status" value="1"/>
</dbReference>
<dbReference type="Pfam" id="PF01281">
    <property type="entry name" value="Ribosomal_L9_N"/>
    <property type="match status" value="1"/>
</dbReference>
<dbReference type="SUPFAM" id="SSF55658">
    <property type="entry name" value="L9 N-domain-like"/>
    <property type="match status" value="1"/>
</dbReference>
<dbReference type="SUPFAM" id="SSF55653">
    <property type="entry name" value="Ribosomal protein L9 C-domain"/>
    <property type="match status" value="1"/>
</dbReference>
<dbReference type="PROSITE" id="PS00651">
    <property type="entry name" value="RIBOSOMAL_L9"/>
    <property type="match status" value="1"/>
</dbReference>
<protein>
    <recommendedName>
        <fullName evidence="1">Large ribosomal subunit protein bL9</fullName>
    </recommendedName>
    <alternativeName>
        <fullName evidence="2">50S ribosomal protein L9</fullName>
    </alternativeName>
</protein>
<keyword id="KW-1185">Reference proteome</keyword>
<keyword id="KW-0687">Ribonucleoprotein</keyword>
<keyword id="KW-0689">Ribosomal protein</keyword>
<keyword id="KW-0694">RNA-binding</keyword>
<keyword id="KW-0699">rRNA-binding</keyword>
<feature type="chain" id="PRO_0000236532" description="Large ribosomal subunit protein bL9">
    <location>
        <begin position="1"/>
        <end position="147"/>
    </location>
</feature>